<accession>P02982</accession>
<comment type="function">
    <text>Resistance to tetracycline by an active tetracycline efflux. This is an energy-dependent process that decreases the accumulation of the antibiotic in whole cells. This protein functions as a metal-tetracycline/H(+) antiporter.</text>
</comment>
<comment type="subcellular location">
    <subcellularLocation>
        <location>Cell inner membrane</location>
        <topology>Multi-pass membrane protein</topology>
    </subcellularLocation>
</comment>
<comment type="similarity">
    <text evidence="2">Belongs to the major facilitator superfamily. TCR/Tet family.</text>
</comment>
<evidence type="ECO:0000255" key="1"/>
<evidence type="ECO:0000305" key="2"/>
<feature type="chain" id="PRO_0000173392" description="Tetracycline resistance protein, class A">
    <location>
        <begin position="1"/>
        <end position="399"/>
    </location>
</feature>
<feature type="transmembrane region" description="Helical" evidence="1">
    <location>
        <begin position="7"/>
        <end position="29"/>
    </location>
</feature>
<feature type="transmembrane region" description="Helical" evidence="1">
    <location>
        <begin position="44"/>
        <end position="66"/>
    </location>
</feature>
<feature type="transmembrane region" description="Helical" evidence="1">
    <location>
        <begin position="73"/>
        <end position="95"/>
    </location>
</feature>
<feature type="transmembrane region" description="Helical" evidence="1">
    <location>
        <begin position="99"/>
        <end position="121"/>
    </location>
</feature>
<feature type="transmembrane region" description="Helical" evidence="1">
    <location>
        <begin position="133"/>
        <end position="155"/>
    </location>
</feature>
<feature type="transmembrane region" description="Helical" evidence="1">
    <location>
        <begin position="160"/>
        <end position="182"/>
    </location>
</feature>
<feature type="transmembrane region" description="Helical" evidence="1">
    <location>
        <begin position="203"/>
        <end position="225"/>
    </location>
</feature>
<feature type="transmembrane region" description="Helical" evidence="1">
    <location>
        <begin position="245"/>
        <end position="267"/>
    </location>
</feature>
<feature type="transmembrane region" description="Helical" evidence="1">
    <location>
        <begin position="279"/>
        <end position="298"/>
    </location>
</feature>
<feature type="transmembrane region" description="Helical" evidence="1">
    <location>
        <begin position="302"/>
        <end position="324"/>
    </location>
</feature>
<feature type="transmembrane region" description="Helical" evidence="1">
    <location>
        <begin position="336"/>
        <end position="358"/>
    </location>
</feature>
<feature type="transmembrane region" description="Helical" evidence="1">
    <location>
        <begin position="368"/>
        <end position="390"/>
    </location>
</feature>
<feature type="sequence conflict" description="In Ref. 1; CAA24909." evidence="2" ref="1">
    <original>R</original>
    <variation>I</variation>
    <location>
        <position position="5"/>
    </location>
</feature>
<feature type="sequence conflict" description="In Ref. 1; CAA24909." evidence="2" ref="1">
    <original>M</original>
    <variation>V</variation>
    <location>
        <position position="55"/>
    </location>
</feature>
<feature type="sequence conflict" description="In Ref. 1; CAA24909." evidence="2" ref="1">
    <original>V</original>
    <variation>I</variation>
    <location>
        <position position="75"/>
    </location>
</feature>
<feature type="sequence conflict" description="In Ref. 1; CAA24909." evidence="2" ref="1">
    <original>A</original>
    <variation>T</variation>
    <location>
        <position position="84"/>
    </location>
</feature>
<feature type="sequence conflict" description="In Ref. 1; CAA24909." evidence="2" ref="1">
    <original>ASF</original>
    <variation>SFV</variation>
    <location>
        <begin position="201"/>
        <end position="203"/>
    </location>
</feature>
<geneLocation type="plasmid">
    <name>RP1</name>
</geneLocation>
<geneLocation type="plasmid">
    <name>pLV501</name>
</geneLocation>
<keyword id="KW-0046">Antibiotic resistance</keyword>
<keyword id="KW-0050">Antiport</keyword>
<keyword id="KW-0997">Cell inner membrane</keyword>
<keyword id="KW-1003">Cell membrane</keyword>
<keyword id="KW-0375">Hydrogen ion transport</keyword>
<keyword id="KW-0406">Ion transport</keyword>
<keyword id="KW-0472">Membrane</keyword>
<keyword id="KW-0614">Plasmid</keyword>
<keyword id="KW-0812">Transmembrane</keyword>
<keyword id="KW-1133">Transmembrane helix</keyword>
<keyword id="KW-0813">Transport</keyword>
<keyword id="KW-0814">Transposable element</keyword>
<proteinExistence type="inferred from homology"/>
<protein>
    <recommendedName>
        <fullName>Tetracycline resistance protein, class A</fullName>
        <shortName>TetA(A)</shortName>
    </recommendedName>
</protein>
<dbReference type="EMBL" id="X00006">
    <property type="protein sequence ID" value="CAA24909.1"/>
    <property type="molecule type" value="Genomic_DNA"/>
</dbReference>
<dbReference type="EMBL" id="X61367">
    <property type="protein sequence ID" value="CAA43643.1"/>
    <property type="molecule type" value="Genomic_DNA"/>
</dbReference>
<dbReference type="EMBL" id="L29404">
    <property type="protein sequence ID" value="AAA83545.2"/>
    <property type="molecule type" value="Genomic_DNA"/>
</dbReference>
<dbReference type="PIR" id="A03509">
    <property type="entry name" value="YTECR1"/>
</dbReference>
<dbReference type="PIR" id="JQ1479">
    <property type="entry name" value="JQ1479"/>
</dbReference>
<dbReference type="RefSeq" id="NP_957551.1">
    <property type="nucleotide sequence ID" value="NC_005327.1"/>
</dbReference>
<dbReference type="RefSeq" id="YP_009060101.1">
    <property type="nucleotide sequence ID" value="NC_024956.1"/>
</dbReference>
<dbReference type="RefSeq" id="YP_190205.1">
    <property type="nucleotide sequence ID" value="NC_006671.1"/>
</dbReference>
<dbReference type="SMR" id="P02982"/>
<dbReference type="TCDB" id="2.A.1.2.4">
    <property type="family name" value="the major facilitator superfamily (mfs)"/>
</dbReference>
<dbReference type="OMA" id="LGHLFMT"/>
<dbReference type="GO" id="GO:0005886">
    <property type="term" value="C:plasma membrane"/>
    <property type="evidence" value="ECO:0007669"/>
    <property type="project" value="UniProtKB-SubCell"/>
</dbReference>
<dbReference type="GO" id="GO:0015297">
    <property type="term" value="F:antiporter activity"/>
    <property type="evidence" value="ECO:0007669"/>
    <property type="project" value="UniProtKB-KW"/>
</dbReference>
<dbReference type="GO" id="GO:0042910">
    <property type="term" value="F:xenobiotic transmembrane transporter activity"/>
    <property type="evidence" value="ECO:0007669"/>
    <property type="project" value="InterPro"/>
</dbReference>
<dbReference type="GO" id="GO:1902600">
    <property type="term" value="P:proton transmembrane transport"/>
    <property type="evidence" value="ECO:0007669"/>
    <property type="project" value="UniProtKB-KW"/>
</dbReference>
<dbReference type="GO" id="GO:0046677">
    <property type="term" value="P:response to antibiotic"/>
    <property type="evidence" value="ECO:0007669"/>
    <property type="project" value="UniProtKB-KW"/>
</dbReference>
<dbReference type="CDD" id="cd17388">
    <property type="entry name" value="MFS_TetA"/>
    <property type="match status" value="1"/>
</dbReference>
<dbReference type="Gene3D" id="1.20.1250.20">
    <property type="entry name" value="MFS general substrate transporter like domains"/>
    <property type="match status" value="1"/>
</dbReference>
<dbReference type="InterPro" id="IPR011701">
    <property type="entry name" value="MFS"/>
</dbReference>
<dbReference type="InterPro" id="IPR020846">
    <property type="entry name" value="MFS_dom"/>
</dbReference>
<dbReference type="InterPro" id="IPR036259">
    <property type="entry name" value="MFS_trans_sf"/>
</dbReference>
<dbReference type="InterPro" id="IPR004734">
    <property type="entry name" value="Multidrug-R"/>
</dbReference>
<dbReference type="InterPro" id="IPR005829">
    <property type="entry name" value="Sugar_transporter_CS"/>
</dbReference>
<dbReference type="InterPro" id="IPR001958">
    <property type="entry name" value="Tet-R_TetA/multi-R_MdtG-like"/>
</dbReference>
<dbReference type="NCBIfam" id="TIGR00880">
    <property type="entry name" value="2_A_01_02"/>
    <property type="match status" value="1"/>
</dbReference>
<dbReference type="NCBIfam" id="NF012193">
    <property type="entry name" value="tet_MFS_A"/>
    <property type="match status" value="1"/>
</dbReference>
<dbReference type="NCBIfam" id="NF012174">
    <property type="entry name" value="tet_MFS_A_B_C_D"/>
    <property type="match status" value="1"/>
</dbReference>
<dbReference type="PANTHER" id="PTHR23507:SF1">
    <property type="entry name" value="FI18259P1-RELATED"/>
    <property type="match status" value="1"/>
</dbReference>
<dbReference type="PANTHER" id="PTHR23507">
    <property type="entry name" value="ZGC:174356"/>
    <property type="match status" value="1"/>
</dbReference>
<dbReference type="Pfam" id="PF07690">
    <property type="entry name" value="MFS_1"/>
    <property type="match status" value="2"/>
</dbReference>
<dbReference type="PRINTS" id="PR01035">
    <property type="entry name" value="TCRTETA"/>
</dbReference>
<dbReference type="SUPFAM" id="SSF103473">
    <property type="entry name" value="MFS general substrate transporter"/>
    <property type="match status" value="1"/>
</dbReference>
<dbReference type="PROSITE" id="PS50850">
    <property type="entry name" value="MFS"/>
    <property type="match status" value="1"/>
</dbReference>
<dbReference type="PROSITE" id="PS00216">
    <property type="entry name" value="SUGAR_TRANSPORT_1"/>
    <property type="match status" value="1"/>
</dbReference>
<name>TCR1_ECOLX</name>
<organism>
    <name type="scientific">Escherichia coli</name>
    <dbReference type="NCBI Taxonomy" id="562"/>
    <lineage>
        <taxon>Bacteria</taxon>
        <taxon>Pseudomonadati</taxon>
        <taxon>Pseudomonadota</taxon>
        <taxon>Gammaproteobacteria</taxon>
        <taxon>Enterobacterales</taxon>
        <taxon>Enterobacteriaceae</taxon>
        <taxon>Escherichia</taxon>
    </lineage>
</organism>
<reference key="1">
    <citation type="journal article" date="1983" name="Nucleic Acids Res.">
        <title>The tetracycline resistance determinants of RP1 and Tn1721: nucleotide sequence analysis.</title>
        <authorList>
            <person name="Waters S.H."/>
            <person name="Rogowsky P."/>
            <person name="Grinsted J."/>
            <person name="Altenbuchner J."/>
            <person name="Schmitt R."/>
        </authorList>
    </citation>
    <scope>NUCLEOTIDE SEQUENCE [GENOMIC DNA]</scope>
    <source>
        <plasmid>RP1</plasmid>
        <transposon>Tn1721</transposon>
    </source>
</reference>
<reference key="2">
    <citation type="journal article" date="1992" name="Gene">
        <title>Complete nucleotide sequence of Tn1721: gene organization and a novel gene product with features of a chemotaxis protein.</title>
        <authorList>
            <person name="Allmeier H."/>
            <person name="Cresnar B."/>
            <person name="Greck M."/>
            <person name="Schmitt R."/>
        </authorList>
    </citation>
    <scope>NUCLEOTIDE SEQUENCE [GENOMIC DNA]</scope>
    <source>
        <transposon>Tn1721</transposon>
    </source>
</reference>
<reference key="3">
    <citation type="submission" date="1994-03" db="EMBL/GenBank/DDBJ databases">
        <title>The epithelial cell invasive determinant of enteropathogenic Escherichia coli plasmid pLV501 is encoded on Tn4355, a novel Tn21-type transposon.</title>
        <authorList>
            <person name="Fletcher J.N."/>
            <person name="Hart C.A."/>
            <person name="Batt R.M."/>
            <person name="Saunders J.R."/>
        </authorList>
    </citation>
    <scope>NUCLEOTIDE SEQUENCE [GENOMIC DNA] OF 85-399</scope>
    <source>
        <plasmid>pLV501</plasmid>
    </source>
</reference>
<gene>
    <name type="primary">tetA</name>
</gene>
<sequence length="399" mass="42241">MKPNRPLIVILSTVALDAVGIGLIMPVLPGLLRDLVHSNDVTAHYGILLALYALMQFACAPVLGALSDRFGRRPVLLVSLAGAAVDYAIMATAPFLWVLYIGRIVAGITGATGAVAGAYIADITDGDERARHFGFMSACFGFGMVAGPVLGGLMGGFSPHAPFFAAAALNGLNFLTGCFLLPESHKGERRPLRREALNPLASFRWARGMTVVAALMAVFFIMQLVGQVPAALWVIFGEDRFHWDATTIGISLAAFGILHSLAQAMITGPVAARLGERRALMLGMIADGTGYILLAFATRGWMAFPIMVLLASGGIGMPALQAMLSRQVDEERQGQLQGSLAALTSLTSIVGPLLFTAIYAASITTWNGWAWIAGAALYLLCLPALRRGLWSGAGQRADR</sequence>